<comment type="subcellular location">
    <subcellularLocation>
        <location evidence="2">Membrane</location>
        <topology evidence="2">Multi-pass membrane protein</topology>
    </subcellularLocation>
</comment>
<comment type="similarity">
    <text evidence="2">Belongs to the oligopeptide OPT transporter family.</text>
</comment>
<keyword id="KW-0325">Glycoprotein</keyword>
<keyword id="KW-0472">Membrane</keyword>
<keyword id="KW-0571">Peptide transport</keyword>
<keyword id="KW-0653">Protein transport</keyword>
<keyword id="KW-1185">Reference proteome</keyword>
<keyword id="KW-0812">Transmembrane</keyword>
<keyword id="KW-1133">Transmembrane helix</keyword>
<keyword id="KW-0813">Transport</keyword>
<reference key="1">
    <citation type="journal article" date="2002" name="Nature">
        <title>The genome sequence of Schizosaccharomyces pombe.</title>
        <authorList>
            <person name="Wood V."/>
            <person name="Gwilliam R."/>
            <person name="Rajandream M.A."/>
            <person name="Lyne M.H."/>
            <person name="Lyne R."/>
            <person name="Stewart A."/>
            <person name="Sgouros J.G."/>
            <person name="Peat N."/>
            <person name="Hayles J."/>
            <person name="Baker S.G."/>
            <person name="Basham D."/>
            <person name="Bowman S."/>
            <person name="Brooks K."/>
            <person name="Brown D."/>
            <person name="Brown S."/>
            <person name="Chillingworth T."/>
            <person name="Churcher C.M."/>
            <person name="Collins M."/>
            <person name="Connor R."/>
            <person name="Cronin A."/>
            <person name="Davis P."/>
            <person name="Feltwell T."/>
            <person name="Fraser A."/>
            <person name="Gentles S."/>
            <person name="Goble A."/>
            <person name="Hamlin N."/>
            <person name="Harris D.E."/>
            <person name="Hidalgo J."/>
            <person name="Hodgson G."/>
            <person name="Holroyd S."/>
            <person name="Hornsby T."/>
            <person name="Howarth S."/>
            <person name="Huckle E.J."/>
            <person name="Hunt S."/>
            <person name="Jagels K."/>
            <person name="James K.D."/>
            <person name="Jones L."/>
            <person name="Jones M."/>
            <person name="Leather S."/>
            <person name="McDonald S."/>
            <person name="McLean J."/>
            <person name="Mooney P."/>
            <person name="Moule S."/>
            <person name="Mungall K.L."/>
            <person name="Murphy L.D."/>
            <person name="Niblett D."/>
            <person name="Odell C."/>
            <person name="Oliver K."/>
            <person name="O'Neil S."/>
            <person name="Pearson D."/>
            <person name="Quail M.A."/>
            <person name="Rabbinowitsch E."/>
            <person name="Rutherford K.M."/>
            <person name="Rutter S."/>
            <person name="Saunders D."/>
            <person name="Seeger K."/>
            <person name="Sharp S."/>
            <person name="Skelton J."/>
            <person name="Simmonds M.N."/>
            <person name="Squares R."/>
            <person name="Squares S."/>
            <person name="Stevens K."/>
            <person name="Taylor K."/>
            <person name="Taylor R.G."/>
            <person name="Tivey A."/>
            <person name="Walsh S.V."/>
            <person name="Warren T."/>
            <person name="Whitehead S."/>
            <person name="Woodward J.R."/>
            <person name="Volckaert G."/>
            <person name="Aert R."/>
            <person name="Robben J."/>
            <person name="Grymonprez B."/>
            <person name="Weltjens I."/>
            <person name="Vanstreels E."/>
            <person name="Rieger M."/>
            <person name="Schaefer M."/>
            <person name="Mueller-Auer S."/>
            <person name="Gabel C."/>
            <person name="Fuchs M."/>
            <person name="Duesterhoeft A."/>
            <person name="Fritzc C."/>
            <person name="Holzer E."/>
            <person name="Moestl D."/>
            <person name="Hilbert H."/>
            <person name="Borzym K."/>
            <person name="Langer I."/>
            <person name="Beck A."/>
            <person name="Lehrach H."/>
            <person name="Reinhardt R."/>
            <person name="Pohl T.M."/>
            <person name="Eger P."/>
            <person name="Zimmermann W."/>
            <person name="Wedler H."/>
            <person name="Wambutt R."/>
            <person name="Purnelle B."/>
            <person name="Goffeau A."/>
            <person name="Cadieu E."/>
            <person name="Dreano S."/>
            <person name="Gloux S."/>
            <person name="Lelaure V."/>
            <person name="Mottier S."/>
            <person name="Galibert F."/>
            <person name="Aves S.J."/>
            <person name="Xiang Z."/>
            <person name="Hunt C."/>
            <person name="Moore K."/>
            <person name="Hurst S.M."/>
            <person name="Lucas M."/>
            <person name="Rochet M."/>
            <person name="Gaillardin C."/>
            <person name="Tallada V.A."/>
            <person name="Garzon A."/>
            <person name="Thode G."/>
            <person name="Daga R.R."/>
            <person name="Cruzado L."/>
            <person name="Jimenez J."/>
            <person name="Sanchez M."/>
            <person name="del Rey F."/>
            <person name="Benito J."/>
            <person name="Dominguez A."/>
            <person name="Revuelta J.L."/>
            <person name="Moreno S."/>
            <person name="Armstrong J."/>
            <person name="Forsburg S.L."/>
            <person name="Cerutti L."/>
            <person name="Lowe T."/>
            <person name="McCombie W.R."/>
            <person name="Paulsen I."/>
            <person name="Potashkin J."/>
            <person name="Shpakovski G.V."/>
            <person name="Ussery D."/>
            <person name="Barrell B.G."/>
            <person name="Nurse P."/>
        </authorList>
    </citation>
    <scope>NUCLEOTIDE SEQUENCE [LARGE SCALE GENOMIC DNA]</scope>
    <source>
        <strain>972 / ATCC 24843</strain>
    </source>
</reference>
<accession>Q7LL00</accession>
<gene>
    <name type="ORF">SPCC1840.12</name>
    <name type="ORF">SPCC965.02</name>
</gene>
<evidence type="ECO:0000255" key="1"/>
<evidence type="ECO:0000305" key="2"/>
<organism>
    <name type="scientific">Schizosaccharomyces pombe (strain 972 / ATCC 24843)</name>
    <name type="common">Fission yeast</name>
    <dbReference type="NCBI Taxonomy" id="284812"/>
    <lineage>
        <taxon>Eukaryota</taxon>
        <taxon>Fungi</taxon>
        <taxon>Dikarya</taxon>
        <taxon>Ascomycota</taxon>
        <taxon>Taphrinomycotina</taxon>
        <taxon>Schizosaccharomycetes</taxon>
        <taxon>Schizosaccharomycetales</taxon>
        <taxon>Schizosaccharomycetaceae</taxon>
        <taxon>Schizosaccharomyces</taxon>
    </lineage>
</organism>
<dbReference type="EMBL" id="CU329672">
    <property type="protein sequence ID" value="CAA20135.2"/>
    <property type="molecule type" value="Genomic_DNA"/>
</dbReference>
<dbReference type="RefSeq" id="NP_588512.2">
    <property type="nucleotide sequence ID" value="NM_001023501.1"/>
</dbReference>
<dbReference type="BioGRID" id="275543">
    <property type="interactions" value="6"/>
</dbReference>
<dbReference type="STRING" id="284812.Q7LL00"/>
<dbReference type="iPTMnet" id="Q7LL00"/>
<dbReference type="PaxDb" id="4896-SPCC1840.12.1"/>
<dbReference type="EnsemblFungi" id="SPCC1840.12.1">
    <property type="protein sequence ID" value="SPCC1840.12.1:pep"/>
    <property type="gene ID" value="SPCC1840.12"/>
</dbReference>
<dbReference type="GeneID" id="2538969"/>
<dbReference type="KEGG" id="spo:2538969"/>
<dbReference type="PomBase" id="SPCC1840.12"/>
<dbReference type="VEuPathDB" id="FungiDB:SPCC1840.12"/>
<dbReference type="eggNOG" id="KOG2262">
    <property type="taxonomic scope" value="Eukaryota"/>
</dbReference>
<dbReference type="HOGENOM" id="CLU_004965_1_1_1"/>
<dbReference type="InParanoid" id="Q7LL00"/>
<dbReference type="OMA" id="AWISWCK"/>
<dbReference type="PhylomeDB" id="Q7LL00"/>
<dbReference type="PRO" id="PR:Q7LL00"/>
<dbReference type="Proteomes" id="UP000002485">
    <property type="component" value="Chromosome III"/>
</dbReference>
<dbReference type="GO" id="GO:0005886">
    <property type="term" value="C:plasma membrane"/>
    <property type="evidence" value="ECO:0000318"/>
    <property type="project" value="GO_Central"/>
</dbReference>
<dbReference type="GO" id="GO:0035673">
    <property type="term" value="F:oligopeptide transmembrane transporter activity"/>
    <property type="evidence" value="ECO:0000318"/>
    <property type="project" value="GO_Central"/>
</dbReference>
<dbReference type="GO" id="GO:0035672">
    <property type="term" value="P:oligopeptide transmembrane transport"/>
    <property type="evidence" value="ECO:0000255"/>
    <property type="project" value="PomBase"/>
</dbReference>
<dbReference type="GO" id="GO:0015031">
    <property type="term" value="P:protein transport"/>
    <property type="evidence" value="ECO:0007669"/>
    <property type="project" value="UniProtKB-KW"/>
</dbReference>
<dbReference type="InterPro" id="IPR004648">
    <property type="entry name" value="Oligpept_transpt"/>
</dbReference>
<dbReference type="InterPro" id="IPR004813">
    <property type="entry name" value="OPT"/>
</dbReference>
<dbReference type="NCBIfam" id="TIGR00727">
    <property type="entry name" value="ISP4_OPT"/>
    <property type="match status" value="1"/>
</dbReference>
<dbReference type="NCBIfam" id="TIGR00728">
    <property type="entry name" value="OPT_sfam"/>
    <property type="match status" value="1"/>
</dbReference>
<dbReference type="PANTHER" id="PTHR22601">
    <property type="entry name" value="ISP4 LIKE PROTEIN"/>
    <property type="match status" value="1"/>
</dbReference>
<dbReference type="Pfam" id="PF03169">
    <property type="entry name" value="OPT"/>
    <property type="match status" value="1"/>
</dbReference>
<proteinExistence type="inferred from homology"/>
<feature type="chain" id="PRO_0000353819" description="Uncharacterized oligopeptide transporter C1840.12">
    <location>
        <begin position="1"/>
        <end position="791"/>
    </location>
</feature>
<feature type="transmembrane region" description="Helical" evidence="1">
    <location>
        <begin position="104"/>
        <end position="124"/>
    </location>
</feature>
<feature type="transmembrane region" description="Helical" evidence="1">
    <location>
        <begin position="131"/>
        <end position="151"/>
    </location>
</feature>
<feature type="transmembrane region" description="Helical" evidence="1">
    <location>
        <begin position="177"/>
        <end position="197"/>
    </location>
</feature>
<feature type="transmembrane region" description="Helical" evidence="1">
    <location>
        <begin position="226"/>
        <end position="246"/>
    </location>
</feature>
<feature type="transmembrane region" description="Helical" evidence="1">
    <location>
        <begin position="274"/>
        <end position="294"/>
    </location>
</feature>
<feature type="transmembrane region" description="Helical" evidence="1">
    <location>
        <begin position="309"/>
        <end position="329"/>
    </location>
</feature>
<feature type="transmembrane region" description="Helical" evidence="1">
    <location>
        <begin position="346"/>
        <end position="366"/>
    </location>
</feature>
<feature type="transmembrane region" description="Helical" evidence="1">
    <location>
        <begin position="421"/>
        <end position="441"/>
    </location>
</feature>
<feature type="transmembrane region" description="Helical" evidence="1">
    <location>
        <begin position="471"/>
        <end position="491"/>
    </location>
</feature>
<feature type="transmembrane region" description="Helical" evidence="1">
    <location>
        <begin position="501"/>
        <end position="521"/>
    </location>
</feature>
<feature type="transmembrane region" description="Helical" evidence="1">
    <location>
        <begin position="533"/>
        <end position="553"/>
    </location>
</feature>
<feature type="transmembrane region" description="Helical" evidence="1">
    <location>
        <begin position="583"/>
        <end position="603"/>
    </location>
</feature>
<feature type="transmembrane region" description="Helical" evidence="1">
    <location>
        <begin position="653"/>
        <end position="673"/>
    </location>
</feature>
<feature type="transmembrane region" description="Helical" evidence="1">
    <location>
        <begin position="697"/>
        <end position="717"/>
    </location>
</feature>
<feature type="transmembrane region" description="Helical" evidence="1">
    <location>
        <begin position="733"/>
        <end position="753"/>
    </location>
</feature>
<feature type="glycosylation site" description="N-linked (GlcNAc...) asparagine" evidence="1">
    <location>
        <position position="265"/>
    </location>
</feature>
<feature type="glycosylation site" description="N-linked (GlcNAc...) asparagine" evidence="1">
    <location>
        <position position="621"/>
    </location>
</feature>
<feature type="glycosylation site" description="N-linked (GlcNAc...) asparagine" evidence="1">
    <location>
        <position position="759"/>
    </location>
</feature>
<protein>
    <recommendedName>
        <fullName>Uncharacterized oligopeptide transporter C1840.12</fullName>
    </recommendedName>
</protein>
<sequence length="791" mass="89256">MKTPKFITYVTRGFKGLESKSVENNKDHIVENSSPIASKFHEFDEQKKSFEIINYAGHEKFVDDITERESSVPGNAVYDITVRDIDAIVPVTDDVDIPASTFRMWILAFGLATVIAGVDAFFLMRYPSVSIAAIVALLVAYPLGQLWYYIIPQWEIKLPRGIRVSLNPGRFNRKEHACLYIFVNICVSAKLVNTLIIEQIKFFGVNIGIGRAILFNLCSYLSSFGWSGLALPILVYPPTLIWPSVLSSCALFKIFHDNDNTKACNWTISRLRYFFIVFVASFIWYWFPDLIFPALSSLGAWISWCKPSSAVLSQIFGVKTGLGLFPLTLDWAQISSLSNPLITPWWATCCIFTSFVFWIWIVLPGLYYQNYWQVAHFPIMTNSIYTVSGKSYDAQKVVDSKWELVTQKYQEYSPVMLPIAFIINIALSLGAFSSMMISFFLRFPTDVIQPICHVFKYSDIHTKLLKKYKRVHWGFYLASIIVSLGLGFAFTEGWHDIQIRSYGFVVSMVIGAALYIPLSLIESRSSFTISMQAFFEIVAAFWFNGQPMALLYFYSFGFGTLQHAMHMTQSAKIGHYMKVPPRLVAALLFTSGIWSSLVNSAVTGWIMYHVRDVCTSNAENNMTCRSPKTQFNSHLIWGLVGNHIFSSDGRYSFVMWFFLVGAVVSVVVYLLQISFPKSSWKHVNPALLLGGAAQIPSVTGINYSTWAAVAFCFNYLIRRGYYSWWKKYNLITAAAMDCGVAIAGLFIYFCVVYTGGSSNFSWWGTTVSSAGCDKKGCAHLSVSDISKPSGW</sequence>
<name>YQJC_SCHPO</name>